<accession>Q8TE02</accession>
<accession>A8K1M5</accession>
<accession>D3DTN9</accession>
<accession>Q659B6</accession>
<accession>Q7Z2T4</accession>
<accession>Q8TDR9</accession>
<accession>Q9BUB2</accession>
<accession>Q9Y2Q4</accession>
<gene>
    <name evidence="9 13" type="primary">ELP5</name>
    <name type="synonym">C17orf81</name>
    <name evidence="8" type="synonym">DERP6</name>
    <name type="ORF">HSPC002</name>
    <name type="ORF">MSTP071</name>
</gene>
<protein>
    <recommendedName>
        <fullName evidence="9">Elongator complex protein 5</fullName>
    </recommendedName>
    <alternativeName>
        <fullName evidence="8">Dermal papilla-derived protein 6</fullName>
    </alternativeName>
    <alternativeName>
        <fullName>S-phase 2 protein</fullName>
    </alternativeName>
</protein>
<proteinExistence type="evidence at protein level"/>
<keyword id="KW-0024">Alternative initiation</keyword>
<keyword id="KW-0025">Alternative splicing</keyword>
<keyword id="KW-0963">Cytoplasm</keyword>
<keyword id="KW-0539">Nucleus</keyword>
<keyword id="KW-0597">Phosphoprotein</keyword>
<keyword id="KW-1267">Proteomics identification</keyword>
<keyword id="KW-1185">Reference proteome</keyword>
<keyword id="KW-0819">tRNA processing</keyword>
<reference key="1">
    <citation type="journal article" date="2006" name="Mol. Biol. Rep.">
        <title>Cloning and characterization of the human gene DERP6, which activates transcriptional activities of p53.</title>
        <authorList>
            <person name="Yuan J."/>
            <person name="Tang W."/>
            <person name="Luo K."/>
            <person name="Chen X."/>
            <person name="Gu X."/>
            <person name="Wan B."/>
            <person name="Yu L."/>
        </authorList>
    </citation>
    <scope>NUCLEOTIDE SEQUENCE [MRNA] (ISOFORM 1)</scope>
    <scope>SUBCELLULAR LOCATION</scope>
</reference>
<reference key="2">
    <citation type="submission" date="1998-05" db="EMBL/GenBank/DDBJ databases">
        <title>Molecular cloning of a dermal papilla derived gene.</title>
        <authorList>
            <person name="Ikeda A."/>
            <person name="Yoshimoto M."/>
        </authorList>
    </citation>
    <scope>NUCLEOTIDE SEQUENCE [MRNA] (ISOFORM 1)</scope>
    <scope>VARIANT LYS-14 (ISOFORM 1)</scope>
    <source>
        <tissue>Hair follicle dermal papilla</tissue>
    </source>
</reference>
<reference key="3">
    <citation type="submission" date="1998-08" db="EMBL/GenBank/DDBJ databases">
        <authorList>
            <person name="Yu L."/>
        </authorList>
    </citation>
    <scope>NUCLEOTIDE SEQUENCE [MRNA] (ISOFORM 5)</scope>
</reference>
<reference key="4">
    <citation type="journal article" date="2004" name="Nat. Genet.">
        <title>Complete sequencing and characterization of 21,243 full-length human cDNAs.</title>
        <authorList>
            <person name="Ota T."/>
            <person name="Suzuki Y."/>
            <person name="Nishikawa T."/>
            <person name="Otsuki T."/>
            <person name="Sugiyama T."/>
            <person name="Irie R."/>
            <person name="Wakamatsu A."/>
            <person name="Hayashi K."/>
            <person name="Sato H."/>
            <person name="Nagai K."/>
            <person name="Kimura K."/>
            <person name="Makita H."/>
            <person name="Sekine M."/>
            <person name="Obayashi M."/>
            <person name="Nishi T."/>
            <person name="Shibahara T."/>
            <person name="Tanaka T."/>
            <person name="Ishii S."/>
            <person name="Yamamoto J."/>
            <person name="Saito K."/>
            <person name="Kawai Y."/>
            <person name="Isono Y."/>
            <person name="Nakamura Y."/>
            <person name="Nagahari K."/>
            <person name="Murakami K."/>
            <person name="Yasuda T."/>
            <person name="Iwayanagi T."/>
            <person name="Wagatsuma M."/>
            <person name="Shiratori A."/>
            <person name="Sudo H."/>
            <person name="Hosoiri T."/>
            <person name="Kaku Y."/>
            <person name="Kodaira H."/>
            <person name="Kondo H."/>
            <person name="Sugawara M."/>
            <person name="Takahashi M."/>
            <person name="Kanda K."/>
            <person name="Yokoi T."/>
            <person name="Furuya T."/>
            <person name="Kikkawa E."/>
            <person name="Omura Y."/>
            <person name="Abe K."/>
            <person name="Kamihara K."/>
            <person name="Katsuta N."/>
            <person name="Sato K."/>
            <person name="Tanikawa M."/>
            <person name="Yamazaki M."/>
            <person name="Ninomiya K."/>
            <person name="Ishibashi T."/>
            <person name="Yamashita H."/>
            <person name="Murakawa K."/>
            <person name="Fujimori K."/>
            <person name="Tanai H."/>
            <person name="Kimata M."/>
            <person name="Watanabe M."/>
            <person name="Hiraoka S."/>
            <person name="Chiba Y."/>
            <person name="Ishida S."/>
            <person name="Ono Y."/>
            <person name="Takiguchi S."/>
            <person name="Watanabe S."/>
            <person name="Yosida M."/>
            <person name="Hotuta T."/>
            <person name="Kusano J."/>
            <person name="Kanehori K."/>
            <person name="Takahashi-Fujii A."/>
            <person name="Hara H."/>
            <person name="Tanase T.-O."/>
            <person name="Nomura Y."/>
            <person name="Togiya S."/>
            <person name="Komai F."/>
            <person name="Hara R."/>
            <person name="Takeuchi K."/>
            <person name="Arita M."/>
            <person name="Imose N."/>
            <person name="Musashino K."/>
            <person name="Yuuki H."/>
            <person name="Oshima A."/>
            <person name="Sasaki N."/>
            <person name="Aotsuka S."/>
            <person name="Yoshikawa Y."/>
            <person name="Matsunawa H."/>
            <person name="Ichihara T."/>
            <person name="Shiohata N."/>
            <person name="Sano S."/>
            <person name="Moriya S."/>
            <person name="Momiyama H."/>
            <person name="Satoh N."/>
            <person name="Takami S."/>
            <person name="Terashima Y."/>
            <person name="Suzuki O."/>
            <person name="Nakagawa S."/>
            <person name="Senoh A."/>
            <person name="Mizoguchi H."/>
            <person name="Goto Y."/>
            <person name="Shimizu F."/>
            <person name="Wakebe H."/>
            <person name="Hishigaki H."/>
            <person name="Watanabe T."/>
            <person name="Sugiyama A."/>
            <person name="Takemoto M."/>
            <person name="Kawakami B."/>
            <person name="Yamazaki M."/>
            <person name="Watanabe K."/>
            <person name="Kumagai A."/>
            <person name="Itakura S."/>
            <person name="Fukuzumi Y."/>
            <person name="Fujimori Y."/>
            <person name="Komiyama M."/>
            <person name="Tashiro H."/>
            <person name="Tanigami A."/>
            <person name="Fujiwara T."/>
            <person name="Ono T."/>
            <person name="Yamada K."/>
            <person name="Fujii Y."/>
            <person name="Ozaki K."/>
            <person name="Hirao M."/>
            <person name="Ohmori Y."/>
            <person name="Kawabata A."/>
            <person name="Hikiji T."/>
            <person name="Kobatake N."/>
            <person name="Inagaki H."/>
            <person name="Ikema Y."/>
            <person name="Okamoto S."/>
            <person name="Okitani R."/>
            <person name="Kawakami T."/>
            <person name="Noguchi S."/>
            <person name="Itoh T."/>
            <person name="Shigeta K."/>
            <person name="Senba T."/>
            <person name="Matsumura K."/>
            <person name="Nakajima Y."/>
            <person name="Mizuno T."/>
            <person name="Morinaga M."/>
            <person name="Sasaki M."/>
            <person name="Togashi T."/>
            <person name="Oyama M."/>
            <person name="Hata H."/>
            <person name="Watanabe M."/>
            <person name="Komatsu T."/>
            <person name="Mizushima-Sugano J."/>
            <person name="Satoh T."/>
            <person name="Shirai Y."/>
            <person name="Takahashi Y."/>
            <person name="Nakagawa K."/>
            <person name="Okumura K."/>
            <person name="Nagase T."/>
            <person name="Nomura N."/>
            <person name="Kikuchi H."/>
            <person name="Masuho Y."/>
            <person name="Yamashita R."/>
            <person name="Nakai K."/>
            <person name="Yada T."/>
            <person name="Nakamura Y."/>
            <person name="Ohara O."/>
            <person name="Isogai T."/>
            <person name="Sugano S."/>
        </authorList>
    </citation>
    <scope>NUCLEOTIDE SEQUENCE [LARGE SCALE MRNA] (ISOFORM 2)</scope>
    <source>
        <tissue>Hippocampus</tissue>
    </source>
</reference>
<reference key="5">
    <citation type="journal article" date="2006" name="Nature">
        <title>DNA sequence of human chromosome 17 and analysis of rearrangement in the human lineage.</title>
        <authorList>
            <person name="Zody M.C."/>
            <person name="Garber M."/>
            <person name="Adams D.J."/>
            <person name="Sharpe T."/>
            <person name="Harrow J."/>
            <person name="Lupski J.R."/>
            <person name="Nicholson C."/>
            <person name="Searle S.M."/>
            <person name="Wilming L."/>
            <person name="Young S.K."/>
            <person name="Abouelleil A."/>
            <person name="Allen N.R."/>
            <person name="Bi W."/>
            <person name="Bloom T."/>
            <person name="Borowsky M.L."/>
            <person name="Bugalter B.E."/>
            <person name="Butler J."/>
            <person name="Chang J.L."/>
            <person name="Chen C.-K."/>
            <person name="Cook A."/>
            <person name="Corum B."/>
            <person name="Cuomo C.A."/>
            <person name="de Jong P.J."/>
            <person name="DeCaprio D."/>
            <person name="Dewar K."/>
            <person name="FitzGerald M."/>
            <person name="Gilbert J."/>
            <person name="Gibson R."/>
            <person name="Gnerre S."/>
            <person name="Goldstein S."/>
            <person name="Grafham D.V."/>
            <person name="Grocock R."/>
            <person name="Hafez N."/>
            <person name="Hagopian D.S."/>
            <person name="Hart E."/>
            <person name="Norman C.H."/>
            <person name="Humphray S."/>
            <person name="Jaffe D.B."/>
            <person name="Jones M."/>
            <person name="Kamal M."/>
            <person name="Khodiyar V.K."/>
            <person name="LaButti K."/>
            <person name="Laird G."/>
            <person name="Lehoczky J."/>
            <person name="Liu X."/>
            <person name="Lokyitsang T."/>
            <person name="Loveland J."/>
            <person name="Lui A."/>
            <person name="Macdonald P."/>
            <person name="Major J.E."/>
            <person name="Matthews L."/>
            <person name="Mauceli E."/>
            <person name="McCarroll S.A."/>
            <person name="Mihalev A.H."/>
            <person name="Mudge J."/>
            <person name="Nguyen C."/>
            <person name="Nicol R."/>
            <person name="O'Leary S.B."/>
            <person name="Osoegawa K."/>
            <person name="Schwartz D.C."/>
            <person name="Shaw-Smith C."/>
            <person name="Stankiewicz P."/>
            <person name="Steward C."/>
            <person name="Swarbreck D."/>
            <person name="Venkataraman V."/>
            <person name="Whittaker C.A."/>
            <person name="Yang X."/>
            <person name="Zimmer A.R."/>
            <person name="Bradley A."/>
            <person name="Hubbard T."/>
            <person name="Birren B.W."/>
            <person name="Rogers J."/>
            <person name="Lander E.S."/>
            <person name="Nusbaum C."/>
        </authorList>
    </citation>
    <scope>NUCLEOTIDE SEQUENCE [LARGE SCALE GENOMIC DNA]</scope>
</reference>
<reference key="6">
    <citation type="submission" date="2005-09" db="EMBL/GenBank/DDBJ databases">
        <authorList>
            <person name="Mural R.J."/>
            <person name="Istrail S."/>
            <person name="Sutton G.G."/>
            <person name="Florea L."/>
            <person name="Halpern A.L."/>
            <person name="Mobarry C.M."/>
            <person name="Lippert R."/>
            <person name="Walenz B."/>
            <person name="Shatkay H."/>
            <person name="Dew I."/>
            <person name="Miller J.R."/>
            <person name="Flanigan M.J."/>
            <person name="Edwards N.J."/>
            <person name="Bolanos R."/>
            <person name="Fasulo D."/>
            <person name="Halldorsson B.V."/>
            <person name="Hannenhalli S."/>
            <person name="Turner R."/>
            <person name="Yooseph S."/>
            <person name="Lu F."/>
            <person name="Nusskern D.R."/>
            <person name="Shue B.C."/>
            <person name="Zheng X.H."/>
            <person name="Zhong F."/>
            <person name="Delcher A.L."/>
            <person name="Huson D.H."/>
            <person name="Kravitz S.A."/>
            <person name="Mouchard L."/>
            <person name="Reinert K."/>
            <person name="Remington K.A."/>
            <person name="Clark A.G."/>
            <person name="Waterman M.S."/>
            <person name="Eichler E.E."/>
            <person name="Adams M.D."/>
            <person name="Hunkapiller M.W."/>
            <person name="Myers E.W."/>
            <person name="Venter J.C."/>
        </authorList>
    </citation>
    <scope>NUCLEOTIDE SEQUENCE [LARGE SCALE GENOMIC DNA]</scope>
</reference>
<reference key="7">
    <citation type="journal article" date="2004" name="Genome Res.">
        <title>The status, quality, and expansion of the NIH full-length cDNA project: the Mammalian Gene Collection (MGC).</title>
        <authorList>
            <consortium name="The MGC Project Team"/>
        </authorList>
    </citation>
    <scope>NUCLEOTIDE SEQUENCE [LARGE SCALE MRNA] (ISOFORM 1)</scope>
    <scope>VARIANT TYR-287</scope>
    <source>
        <tissue>Placenta</tissue>
    </source>
</reference>
<reference key="8">
    <citation type="journal article" date="2000" name="Genome Res.">
        <title>Cloning and functional analysis of cDNAs with open reading frames for 300 previously undefined genes expressed in CD34+ hematopoietic stem/progenitor cells.</title>
        <authorList>
            <person name="Zhang Q.-H."/>
            <person name="Ye M."/>
            <person name="Wu X.-Y."/>
            <person name="Ren S.-X."/>
            <person name="Zhao M."/>
            <person name="Zhao C.-J."/>
            <person name="Fu G."/>
            <person name="Shen Y."/>
            <person name="Fan H.-Y."/>
            <person name="Lu G."/>
            <person name="Zhong M."/>
            <person name="Xu X.-R."/>
            <person name="Han Z.-G."/>
            <person name="Zhang J.-W."/>
            <person name="Tao J."/>
            <person name="Huang Q.-H."/>
            <person name="Zhou J."/>
            <person name="Hu G.-X."/>
            <person name="Gu J."/>
            <person name="Chen S.-J."/>
            <person name="Chen Z."/>
        </authorList>
    </citation>
    <scope>NUCLEOTIDE SEQUENCE [LARGE SCALE MRNA] (ISOFORM 3)</scope>
    <source>
        <tissue>Umbilical cord blood</tissue>
    </source>
</reference>
<reference key="9">
    <citation type="submission" date="1999-06" db="EMBL/GenBank/DDBJ databases">
        <authorList>
            <person name="Zhao B."/>
            <person name="Xu Y.Y."/>
            <person name="Liu Y.Q."/>
            <person name="Wang X.Y."/>
            <person name="Liu B."/>
            <person name="Sheng H."/>
            <person name="Ye J."/>
            <person name="Song L."/>
            <person name="Gao Y."/>
            <person name="Zhang C.L."/>
            <person name="Zhang J."/>
            <person name="Gao R.L."/>
            <person name="Wu Q.Y."/>
            <person name="Hui R.T."/>
        </authorList>
    </citation>
    <scope>NUCLEOTIDE SEQUENCE [LARGE SCALE MRNA] OF 8-300 (ISOFORM 2)</scope>
    <source>
        <tissue>Aorta</tissue>
    </source>
</reference>
<reference key="10">
    <citation type="journal article" date="2007" name="BMC Genomics">
        <title>The full-ORF clone resource of the German cDNA consortium.</title>
        <authorList>
            <person name="Bechtel S."/>
            <person name="Rosenfelder H."/>
            <person name="Duda A."/>
            <person name="Schmidt C.P."/>
            <person name="Ernst U."/>
            <person name="Wellenreuther R."/>
            <person name="Mehrle A."/>
            <person name="Schuster C."/>
            <person name="Bahr A."/>
            <person name="Bloecker H."/>
            <person name="Heubner D."/>
            <person name="Hoerlein A."/>
            <person name="Michel G."/>
            <person name="Wedler H."/>
            <person name="Koehrer K."/>
            <person name="Ottenwaelder B."/>
            <person name="Poustka A."/>
            <person name="Wiemann S."/>
            <person name="Schupp I."/>
        </authorList>
    </citation>
    <scope>NUCLEOTIDE SEQUENCE [LARGE SCALE MRNA] OF 133-300 (ISOFORM 2)</scope>
    <source>
        <tissue>Amygdala</tissue>
    </source>
</reference>
<reference key="11">
    <citation type="journal article" date="2012" name="J. Biol. Chem.">
        <title>DERP6 (ELP5) and C3ORF75 (ELP6) regulate tumorigenicity and migration of melanoma cells as subunits of Elongator.</title>
        <authorList>
            <person name="Close P."/>
            <person name="Gillard M."/>
            <person name="Ladang A."/>
            <person name="Jiang Z."/>
            <person name="Papuga J."/>
            <person name="Hawkes N."/>
            <person name="Nguyen L."/>
            <person name="Chapelle J.P."/>
            <person name="Bouillenne F."/>
            <person name="Svejstrup J."/>
            <person name="Fillet M."/>
            <person name="Chariot A."/>
        </authorList>
    </citation>
    <scope>IDENTIFICATION IN THE ELONGATOR COMPLEX</scope>
    <scope>SUBCELLULAR LOCATION</scope>
    <scope>IDENTIFICATION BY MASS SPECTROMETRY</scope>
</reference>
<reference key="12">
    <citation type="journal article" date="2013" name="J. Proteome Res.">
        <title>Toward a comprehensive characterization of a human cancer cell phosphoproteome.</title>
        <authorList>
            <person name="Zhou H."/>
            <person name="Di Palma S."/>
            <person name="Preisinger C."/>
            <person name="Peng M."/>
            <person name="Polat A.N."/>
            <person name="Heck A.J."/>
            <person name="Mohammed S."/>
        </authorList>
    </citation>
    <scope>PHOSPHORYLATION [LARGE SCALE ANALYSIS] AT SER-252</scope>
    <scope>IDENTIFICATION BY MASS SPECTROMETRY [LARGE SCALE ANALYSIS]</scope>
    <source>
        <tissue>Erythroleukemia</tissue>
    </source>
</reference>
<reference key="13">
    <citation type="journal article" date="2018" name="Cell. Mol. Life Sci.">
        <title>Structural insights into the function of Elongator.</title>
        <authorList>
            <person name="Dalwadi U."/>
            <person name="Yip C.K."/>
        </authorList>
    </citation>
    <scope>REVIEW</scope>
</reference>
<reference key="14">
    <citation type="journal article" date="2019" name="Biochem. J.">
        <title>ELP3 Acetyltransferase is phosphorylated and regulated by the oncogenic anaplastic lymphoma kinase (ALK).</title>
        <authorList>
            <person name="Li M.T."/>
            <person name="Liang J.Y."/>
            <person name="Sun Y.P."/>
            <person name="Jin J."/>
            <person name="Xiong Y."/>
            <person name="Guan K.L."/>
            <person name="Yuan H.X."/>
        </authorList>
    </citation>
    <scope>PHOSPHORYLATION</scope>
</reference>
<sequence length="300" mass="33197">MLDSLLALGGLVLLRDSVEWEGRSLLKALVKKSALCGEQVHILGCEVSEEEFREGFDSDINNRLVYHDFFRDPLNWSKTEEAFPGGPLGALRAMCKRTDPVPVTIALDSLSWLLLRLPCTTLCQVLHAVSHQDSCPGDSSSVGKVSVLGLLHEELHGPGPVGALSSLAQTEVTLGGTMGQASAHILCRRPRQRPTDQTQWFSILPDFSLDLQEGPSVESQPYSDPHIPPVDPTTHLTFNLHLSKKEREARDSLILPFQFSSEKQQALLRPRPGQATSHIFYEPDAYDDLDQEDPDDDLDI</sequence>
<evidence type="ECO:0000250" key="1">
    <source>
        <dbReference type="UniProtKB" id="Q99L85"/>
    </source>
</evidence>
<evidence type="ECO:0000256" key="2">
    <source>
        <dbReference type="SAM" id="MobiDB-lite"/>
    </source>
</evidence>
<evidence type="ECO:0000269" key="3">
    <source>
    </source>
</evidence>
<evidence type="ECO:0000269" key="4">
    <source>
    </source>
</evidence>
<evidence type="ECO:0000269" key="5">
    <source>
    </source>
</evidence>
<evidence type="ECO:0000269" key="6">
    <source>
    </source>
</evidence>
<evidence type="ECO:0000269" key="7">
    <source ref="2"/>
</evidence>
<evidence type="ECO:0000303" key="8">
    <source>
    </source>
</evidence>
<evidence type="ECO:0000303" key="9">
    <source>
    </source>
</evidence>
<evidence type="ECO:0000303" key="10">
    <source>
    </source>
</evidence>
<evidence type="ECO:0000305" key="11"/>
<evidence type="ECO:0000305" key="12">
    <source>
    </source>
</evidence>
<evidence type="ECO:0000312" key="13">
    <source>
        <dbReference type="HGNC" id="HGNC:30617"/>
    </source>
</evidence>
<evidence type="ECO:0007744" key="14">
    <source>
    </source>
</evidence>
<dbReference type="EMBL" id="AB013910">
    <property type="protein sequence ID" value="BAB87800.1"/>
    <property type="molecule type" value="mRNA"/>
</dbReference>
<dbReference type="EMBL" id="AF087868">
    <property type="protein sequence ID" value="AAM10496.1"/>
    <property type="status" value="ALT_INIT"/>
    <property type="molecule type" value="mRNA"/>
</dbReference>
<dbReference type="EMBL" id="AK289940">
    <property type="protein sequence ID" value="BAF82629.1"/>
    <property type="molecule type" value="mRNA"/>
</dbReference>
<dbReference type="EMBL" id="AC003688">
    <property type="status" value="NOT_ANNOTATED_CDS"/>
    <property type="molecule type" value="Genomic_DNA"/>
</dbReference>
<dbReference type="EMBL" id="CH471108">
    <property type="protein sequence ID" value="EAW90230.1"/>
    <property type="molecule type" value="Genomic_DNA"/>
</dbReference>
<dbReference type="EMBL" id="CH471108">
    <property type="protein sequence ID" value="EAW90231.1"/>
    <property type="molecule type" value="Genomic_DNA"/>
</dbReference>
<dbReference type="EMBL" id="BC002762">
    <property type="protein sequence ID" value="AAH02762.2"/>
    <property type="molecule type" value="mRNA"/>
</dbReference>
<dbReference type="EMBL" id="AF070658">
    <property type="protein sequence ID" value="AAD20964.1"/>
    <property type="molecule type" value="mRNA"/>
</dbReference>
<dbReference type="EMBL" id="AF163262">
    <property type="protein sequence ID" value="AAQ13591.1"/>
    <property type="status" value="ALT_INIT"/>
    <property type="molecule type" value="mRNA"/>
</dbReference>
<dbReference type="EMBL" id="AL713741">
    <property type="protein sequence ID" value="CAH56280.1"/>
    <property type="status" value="ALT_SEQ"/>
    <property type="molecule type" value="mRNA"/>
</dbReference>
<dbReference type="CCDS" id="CCDS11094.2">
    <molecule id="Q8TE02-5"/>
</dbReference>
<dbReference type="CCDS" id="CCDS11095.2">
    <molecule id="Q8TE02-2"/>
</dbReference>
<dbReference type="RefSeq" id="NP_056177.3">
    <molecule id="Q8TE02-5"/>
    <property type="nucleotide sequence ID" value="NM_015362.4"/>
</dbReference>
<dbReference type="RefSeq" id="NP_981958.2">
    <molecule id="Q8TE02-2"/>
    <property type="nucleotide sequence ID" value="NM_203413.3"/>
</dbReference>
<dbReference type="RefSeq" id="NP_981959.2">
    <molecule id="Q8TE02-5"/>
    <property type="nucleotide sequence ID" value="NM_203414.3"/>
</dbReference>
<dbReference type="RefSeq" id="NP_981960.2">
    <molecule id="Q8TE02-5"/>
    <property type="nucleotide sequence ID" value="NM_203415.4"/>
</dbReference>
<dbReference type="RefSeq" id="XP_011522081.1">
    <molecule id="Q8TE02-1"/>
    <property type="nucleotide sequence ID" value="XM_011523779.3"/>
</dbReference>
<dbReference type="RefSeq" id="XP_054171611.1">
    <molecule id="Q8TE02-1"/>
    <property type="nucleotide sequence ID" value="XM_054315636.1"/>
</dbReference>
<dbReference type="RefSeq" id="XP_054188628.1">
    <molecule id="Q8TE02-1"/>
    <property type="nucleotide sequence ID" value="XM_054332653.1"/>
</dbReference>
<dbReference type="BioGRID" id="117122">
    <property type="interactions" value="25"/>
</dbReference>
<dbReference type="ComplexPortal" id="CPX-1949">
    <property type="entry name" value="Elongator holoenzyme complex"/>
</dbReference>
<dbReference type="CORUM" id="Q8TE02"/>
<dbReference type="FunCoup" id="Q8TE02">
    <property type="interactions" value="2171"/>
</dbReference>
<dbReference type="IntAct" id="Q8TE02">
    <property type="interactions" value="9"/>
</dbReference>
<dbReference type="MINT" id="Q8TE02"/>
<dbReference type="STRING" id="9606.ENSP00000379869"/>
<dbReference type="iPTMnet" id="Q8TE02"/>
<dbReference type="PhosphoSitePlus" id="Q8TE02"/>
<dbReference type="BioMuta" id="ELP5"/>
<dbReference type="DMDM" id="134034093"/>
<dbReference type="jPOST" id="Q8TE02"/>
<dbReference type="MassIVE" id="Q8TE02"/>
<dbReference type="PaxDb" id="9606-ENSP00000379869"/>
<dbReference type="PeptideAtlas" id="Q8TE02"/>
<dbReference type="ProteomicsDB" id="74381">
    <molecule id="Q8TE02-1"/>
</dbReference>
<dbReference type="ProteomicsDB" id="74382">
    <molecule id="Q8TE02-2"/>
</dbReference>
<dbReference type="ProteomicsDB" id="74383">
    <molecule id="Q8TE02-3"/>
</dbReference>
<dbReference type="Pumba" id="Q8TE02"/>
<dbReference type="Antibodypedia" id="11862">
    <property type="antibodies" value="79 antibodies from 20 providers"/>
</dbReference>
<dbReference type="DNASU" id="23587"/>
<dbReference type="Ensembl" id="ENST00000354429.7">
    <molecule id="Q8TE02-5"/>
    <property type="protein sequence ID" value="ENSP00000346412.3"/>
    <property type="gene ID" value="ENSG00000170291.17"/>
</dbReference>
<dbReference type="Ensembl" id="ENST00000356683.7">
    <molecule id="Q8TE02-2"/>
    <property type="protein sequence ID" value="ENSP00000349111.3"/>
    <property type="gene ID" value="ENSG00000170291.17"/>
</dbReference>
<dbReference type="Ensembl" id="ENST00000396627.7">
    <molecule id="Q8TE02-5"/>
    <property type="protein sequence ID" value="ENSP00000379868.3"/>
    <property type="gene ID" value="ENSG00000170291.17"/>
</dbReference>
<dbReference type="Ensembl" id="ENST00000396628.7">
    <molecule id="Q8TE02-5"/>
    <property type="protein sequence ID" value="ENSP00000379869.3"/>
    <property type="gene ID" value="ENSG00000170291.17"/>
</dbReference>
<dbReference type="Ensembl" id="ENST00000573657.6">
    <molecule id="Q8TE02-3"/>
    <property type="protein sequence ID" value="ENSP00000459633.2"/>
    <property type="gene ID" value="ENSG00000170291.17"/>
</dbReference>
<dbReference type="Ensembl" id="ENST00000574255.6">
    <molecule id="Q8TE02-3"/>
    <property type="protein sequence ID" value="ENSP00000461489.2"/>
    <property type="gene ID" value="ENSG00000170291.17"/>
</dbReference>
<dbReference type="Ensembl" id="ENST00000574993.6">
    <molecule id="Q8TE02-2"/>
    <property type="protein sequence ID" value="ENSP00000459835.2"/>
    <property type="gene ID" value="ENSG00000170291.17"/>
</dbReference>
<dbReference type="Ensembl" id="ENST00000671820.1">
    <molecule id="Q8TE02-1"/>
    <property type="protein sequence ID" value="ENSP00000500470.1"/>
    <property type="gene ID" value="ENSG00000288485.1"/>
</dbReference>
<dbReference type="Ensembl" id="ENST00000671829.1">
    <molecule id="Q8TE02-1"/>
    <property type="protein sequence ID" value="ENSP00000500574.1"/>
    <property type="gene ID" value="ENSG00000288485.1"/>
</dbReference>
<dbReference type="Ensembl" id="ENST00000673570.1">
    <molecule id="Q8TE02-1"/>
    <property type="protein sequence ID" value="ENSP00000500315.1"/>
    <property type="gene ID" value="ENSG00000288485.1"/>
</dbReference>
<dbReference type="Ensembl" id="ENST00000715856.1">
    <molecule id="Q8TE02-1"/>
    <property type="protein sequence ID" value="ENSP00000520527.1"/>
    <property type="gene ID" value="ENSG00000170291.17"/>
</dbReference>
<dbReference type="GeneID" id="23587"/>
<dbReference type="KEGG" id="hsa:23587"/>
<dbReference type="MANE-Select" id="ENST00000396628.7">
    <property type="protein sequence ID" value="ENSP00000379869.3"/>
    <property type="RefSeq nucleotide sequence ID" value="NM_203414.3"/>
    <property type="RefSeq protein sequence ID" value="NP_981959.2"/>
</dbReference>
<dbReference type="UCSC" id="uc002gfg.2">
    <molecule id="Q8TE02-5"/>
    <property type="organism name" value="human"/>
</dbReference>
<dbReference type="AGR" id="HGNC:30617"/>
<dbReference type="CTD" id="23587"/>
<dbReference type="DisGeNET" id="23587"/>
<dbReference type="GeneCards" id="ELP5"/>
<dbReference type="HGNC" id="HGNC:30617">
    <property type="gene designation" value="ELP5"/>
</dbReference>
<dbReference type="HPA" id="ENSG00000170291">
    <property type="expression patterns" value="Tissue enhanced (testis)"/>
</dbReference>
<dbReference type="MIM" id="615019">
    <property type="type" value="gene"/>
</dbReference>
<dbReference type="neXtProt" id="NX_Q8TE02"/>
<dbReference type="OpenTargets" id="ENSG00000170291"/>
<dbReference type="PharmGKB" id="PA143485405"/>
<dbReference type="VEuPathDB" id="HostDB:ENSG00000170291"/>
<dbReference type="eggNOG" id="ENOG502QQ2R">
    <property type="taxonomic scope" value="Eukaryota"/>
</dbReference>
<dbReference type="GeneTree" id="ENSGT00390000009210"/>
<dbReference type="HOGENOM" id="CLU_076374_0_0_1"/>
<dbReference type="InParanoid" id="Q8TE02"/>
<dbReference type="OMA" id="DEEIFCI"/>
<dbReference type="OrthoDB" id="166907at2759"/>
<dbReference type="PAN-GO" id="Q8TE02">
    <property type="GO annotations" value="5 GO annotations based on evolutionary models"/>
</dbReference>
<dbReference type="PhylomeDB" id="Q8TE02"/>
<dbReference type="TreeFam" id="TF314636"/>
<dbReference type="BioCyc" id="MetaCyc:ENSG00000170291-MONOMER"/>
<dbReference type="PathwayCommons" id="Q8TE02"/>
<dbReference type="Reactome" id="R-HSA-3214847">
    <property type="pathway name" value="HATs acetylate histones"/>
</dbReference>
<dbReference type="SignaLink" id="Q8TE02"/>
<dbReference type="SIGNOR" id="Q8TE02"/>
<dbReference type="UniPathway" id="UPA00988"/>
<dbReference type="BioGRID-ORCS" id="23587">
    <property type="hits" value="650 hits in 1192 CRISPR screens"/>
</dbReference>
<dbReference type="ChiTaRS" id="ELP5">
    <property type="organism name" value="human"/>
</dbReference>
<dbReference type="GeneWiki" id="C17orf81"/>
<dbReference type="GenomeRNAi" id="23587"/>
<dbReference type="Pharos" id="Q8TE02">
    <property type="development level" value="Tbio"/>
</dbReference>
<dbReference type="PRO" id="PR:Q8TE02"/>
<dbReference type="Proteomes" id="UP000005640">
    <property type="component" value="Chromosome 17"/>
</dbReference>
<dbReference type="RNAct" id="Q8TE02">
    <property type="molecule type" value="protein"/>
</dbReference>
<dbReference type="Bgee" id="ENSG00000170291">
    <property type="expression patterns" value="Expressed in right testis and 99 other cell types or tissues"/>
</dbReference>
<dbReference type="ExpressionAtlas" id="Q8TE02">
    <property type="expression patterns" value="baseline and differential"/>
</dbReference>
<dbReference type="GO" id="GO:0005737">
    <property type="term" value="C:cytoplasm"/>
    <property type="evidence" value="ECO:0000314"/>
    <property type="project" value="UniProtKB"/>
</dbReference>
<dbReference type="GO" id="GO:0005829">
    <property type="term" value="C:cytosol"/>
    <property type="evidence" value="ECO:0000314"/>
    <property type="project" value="HPA"/>
</dbReference>
<dbReference type="GO" id="GO:0033588">
    <property type="term" value="C:elongator holoenzyme complex"/>
    <property type="evidence" value="ECO:0000314"/>
    <property type="project" value="UniProtKB"/>
</dbReference>
<dbReference type="GO" id="GO:0005654">
    <property type="term" value="C:nucleoplasm"/>
    <property type="evidence" value="ECO:0000314"/>
    <property type="project" value="HPA"/>
</dbReference>
<dbReference type="GO" id="GO:0005634">
    <property type="term" value="C:nucleus"/>
    <property type="evidence" value="ECO:0000314"/>
    <property type="project" value="UniProtKB"/>
</dbReference>
<dbReference type="GO" id="GO:0030335">
    <property type="term" value="P:positive regulation of cell migration"/>
    <property type="evidence" value="ECO:0000250"/>
    <property type="project" value="UniProtKB"/>
</dbReference>
<dbReference type="GO" id="GO:0006417">
    <property type="term" value="P:regulation of translation"/>
    <property type="evidence" value="ECO:0000303"/>
    <property type="project" value="ComplexPortal"/>
</dbReference>
<dbReference type="GO" id="GO:0006400">
    <property type="term" value="P:tRNA modification"/>
    <property type="evidence" value="ECO:0000318"/>
    <property type="project" value="GO_Central"/>
</dbReference>
<dbReference type="GO" id="GO:0002098">
    <property type="term" value="P:tRNA wobble uridine modification"/>
    <property type="evidence" value="ECO:0000303"/>
    <property type="project" value="ComplexPortal"/>
</dbReference>
<dbReference type="CDD" id="cd19496">
    <property type="entry name" value="Elp5"/>
    <property type="match status" value="1"/>
</dbReference>
<dbReference type="InterPro" id="IPR019519">
    <property type="entry name" value="Elp5"/>
</dbReference>
<dbReference type="PANTHER" id="PTHR15641">
    <property type="entry name" value="ELONGATOR COMPLEX PROTEIN 5"/>
    <property type="match status" value="1"/>
</dbReference>
<dbReference type="PANTHER" id="PTHR15641:SF1">
    <property type="entry name" value="ELONGATOR COMPLEX PROTEIN 5"/>
    <property type="match status" value="1"/>
</dbReference>
<dbReference type="Pfam" id="PF10483">
    <property type="entry name" value="Elong_Iki1"/>
    <property type="match status" value="2"/>
</dbReference>
<name>ELP5_HUMAN</name>
<comment type="function">
    <text evidence="1 10">Component of the elongator complex which is required for multiple tRNA modifications, including mcm5U (5-methoxycarbonylmethyl uridine), mcm5s2U (5-methoxycarbonylmethyl-2-thiouridine), and ncm5U (5-carbamoylmethyl uridine) (PubMed:29332244). The elongator complex catalyzes formation of carboxymethyluridine in the wobble base at position 34 in tRNAs (PubMed:29332244). Involved in cell migration (By similarity).</text>
</comment>
<comment type="pathway">
    <text evidence="10">tRNA modification; 5-methoxycarbonylmethyl-2-thiouridine-tRNA biosynthesis.</text>
</comment>
<comment type="subunit">
    <text evidence="5">Component of the elongator complex which consists of ELP1, ELP2, ELP3, ELP4, ELP5 and ELP6; in the complex, is required for optimal binding of ELP3 to ELP4.</text>
</comment>
<comment type="interaction">
    <interactant intactId="EBI-946189">
        <id>Q8TE02</id>
    </interactant>
    <interactant intactId="EBI-930964">
        <id>P54253</id>
        <label>ATXN1</label>
    </interactant>
    <organismsDiffer>false</organismsDiffer>
    <experiments>8</experiments>
</comment>
<comment type="interaction">
    <interactant intactId="EBI-946189">
        <id>Q8TE02</id>
    </interactant>
    <interactant intactId="EBI-3951755">
        <id>Q96EB1</id>
        <label>ELP4</label>
    </interactant>
    <organismsDiffer>false</organismsDiffer>
    <experiments>6</experiments>
</comment>
<comment type="interaction">
    <interactant intactId="EBI-946189">
        <id>Q8TE02</id>
    </interactant>
    <interactant intactId="EBI-2932659">
        <id>Q0PNE2</id>
        <label>ELP6</label>
    </interactant>
    <organismsDiffer>false</organismsDiffer>
    <experiments>4</experiments>
</comment>
<comment type="subcellular location">
    <subcellularLocation>
        <location evidence="5">Nucleus</location>
    </subcellularLocation>
    <subcellularLocation>
        <location evidence="4 5">Cytoplasm</location>
    </subcellularLocation>
</comment>
<comment type="alternative products">
    <event type="alternative splicing"/>
    <event type="alternative initiation"/>
    <isoform>
        <id>Q8TE02-5</id>
        <name>5</name>
        <sequence type="displayed"/>
    </isoform>
    <isoform>
        <id>Q8TE02-1</id>
        <name>1</name>
        <sequence type="described" ref="VSP_062149"/>
    </isoform>
    <isoform>
        <id>Q8TE02-2</id>
        <name>2</name>
        <sequence type="described" ref="VSP_062152 VSP_062153"/>
    </isoform>
    <isoform>
        <id>Q8TE02-3</id>
        <name>3</name>
        <sequence type="described" ref="VSP_062150 VSP_062151"/>
    </isoform>
</comment>
<comment type="tissue specificity">
    <text>Ubiquitously expressed with high levels in heart, brain, liver, skeletal muscle and testis.</text>
</comment>
<comment type="PTM">
    <text evidence="6">Tyrosine-phosphorylated.</text>
</comment>
<comment type="miscellaneous">
    <molecule>Isoform 1</molecule>
    <text evidence="11">Produced by alternative initiation at Met-1 of isoform 5.</text>
</comment>
<comment type="miscellaneous">
    <molecule>Isoform 5</molecule>
    <text evidence="11">Major isoform.</text>
</comment>
<comment type="similarity">
    <text evidence="11">Belongs to the ELP5 family.</text>
</comment>
<comment type="caution">
    <text evidence="12">The elongator complex was originally thought to play a role in transcription elongation. However, it is no longer thought to play a direct role in this process and its primary function is thought to be in tRNA modification.</text>
</comment>
<comment type="sequence caution" evidence="11">
    <conflict type="erroneous initiation">
        <sequence resource="EMBL-CDS" id="AAM10496"/>
    </conflict>
    <text>Extended N-terminus.</text>
</comment>
<comment type="sequence caution" evidence="11">
    <conflict type="erroneous initiation">
        <sequence resource="EMBL-CDS" id="AAQ13591"/>
    </conflict>
    <text>Truncated N-terminus.</text>
</comment>
<comment type="sequence caution" evidence="11">
    <conflict type="erroneous translation">
        <sequence resource="EMBL-CDS" id="CAH56280"/>
    </conflict>
    <text>Wrong choice of CDS.</text>
</comment>
<feature type="chain" id="PRO_0000280817" description="Elongator complex protein 5">
    <location>
        <begin position="1"/>
        <end position="300"/>
    </location>
</feature>
<feature type="region of interest" description="Disordered" evidence="2">
    <location>
        <begin position="264"/>
        <end position="300"/>
    </location>
</feature>
<feature type="compositionally biased region" description="Acidic residues" evidence="2">
    <location>
        <begin position="284"/>
        <end position="300"/>
    </location>
</feature>
<feature type="modified residue" description="Phosphoserine" evidence="14">
    <location>
        <position position="252"/>
    </location>
</feature>
<feature type="splice variant" id="VSP_062149" description="In isoform 1.">
    <original>M</original>
    <variation>MTPSEGARAGTGRELEM</variation>
    <location>
        <position position="1"/>
    </location>
</feature>
<feature type="splice variant" id="VSP_062150" description="In isoform 3.">
    <original>DSSSVGKVSVLGLLHEELHGPGPVGA</original>
    <variation>ETPPSLFPLIHLPLPRSVPLFLSTLE</variation>
    <location>
        <begin position="138"/>
        <end position="163"/>
    </location>
</feature>
<feature type="splice variant" id="VSP_062151" description="In isoform 3.">
    <location>
        <begin position="164"/>
        <end position="300"/>
    </location>
</feature>
<feature type="splice variant" id="VSP_062152" description="In isoform 2.">
    <original>DPTTHLTFNLHLSKKEREARDSLILPFQFSSEK</original>
    <variation>SKNAKARTRKCSLVSGHGRENKSCRGWGWGQGF</variation>
    <location>
        <begin position="231"/>
        <end position="263"/>
    </location>
</feature>
<feature type="splice variant" id="VSP_062153" description="In isoform 2.">
    <location>
        <begin position="264"/>
        <end position="300"/>
    </location>
</feature>
<feature type="sequence variant" id="VAR_031205" description="In dbSNP:rs17849664." evidence="3">
    <original>D</original>
    <variation>Y</variation>
    <location>
        <position position="287"/>
    </location>
</feature>
<feature type="sequence conflict" description="In Ref. 3; AAM10496." evidence="11" ref="3">
    <original>C</original>
    <variation>R</variation>
    <location>
        <position position="135"/>
    </location>
</feature>
<feature type="sequence conflict" description="In Ref. 3; AAM10496." evidence="11" ref="3">
    <original>G</original>
    <variation>S</variation>
    <location>
        <position position="159"/>
    </location>
</feature>
<feature type="sequence conflict" description="In Ref. 3; AAM10496." evidence="11" ref="3">
    <original>S</original>
    <variation>N</variation>
    <location>
        <position position="165"/>
    </location>
</feature>
<feature type="sequence conflict" description="In Ref. 3; AAM10496." evidence="11" ref="3">
    <original>Q</original>
    <variation>K</variation>
    <location>
        <position position="212"/>
    </location>
</feature>
<feature type="sequence conflict" description="In Ref. 3; AAM10496." evidence="11" ref="3">
    <original>P</original>
    <variation>R</variation>
    <location>
        <position position="229"/>
    </location>
</feature>
<feature type="sequence variant" id="VAR_088548" description="In dbSNP:rs2521988." evidence="7">
    <original>E</original>
    <variation>K</variation>
    <location sequence="Q8TE02-1">
        <position position="14"/>
    </location>
</feature>
<feature type="sequence conflict" description="In Ref. 9; AAQ13591." evidence="11" ref="9">
    <original>H</original>
    <variation>Q</variation>
    <location sequence="Q8TE02-2">
        <position position="247"/>
    </location>
</feature>
<organism>
    <name type="scientific">Homo sapiens</name>
    <name type="common">Human</name>
    <dbReference type="NCBI Taxonomy" id="9606"/>
    <lineage>
        <taxon>Eukaryota</taxon>
        <taxon>Metazoa</taxon>
        <taxon>Chordata</taxon>
        <taxon>Craniata</taxon>
        <taxon>Vertebrata</taxon>
        <taxon>Euteleostomi</taxon>
        <taxon>Mammalia</taxon>
        <taxon>Eutheria</taxon>
        <taxon>Euarchontoglires</taxon>
        <taxon>Primates</taxon>
        <taxon>Haplorrhini</taxon>
        <taxon>Catarrhini</taxon>
        <taxon>Hominidae</taxon>
        <taxon>Homo</taxon>
    </lineage>
</organism>